<evidence type="ECO:0000250" key="1"/>
<evidence type="ECO:0000255" key="2"/>
<evidence type="ECO:0000255" key="3">
    <source>
        <dbReference type="PROSITE-ProRule" id="PRU01066"/>
    </source>
</evidence>
<evidence type="ECO:0000255" key="4">
    <source>
        <dbReference type="PROSITE-ProRule" id="PRU01170"/>
    </source>
</evidence>
<evidence type="ECO:0000256" key="5">
    <source>
        <dbReference type="SAM" id="MobiDB-lite"/>
    </source>
</evidence>
<evidence type="ECO:0000305" key="6"/>
<protein>
    <recommendedName>
        <fullName>Dihydrolipoyllysine-residue acetyltransferase component of pyruvate dehydrogenase complex</fullName>
        <ecNumber>2.3.1.12</ecNumber>
    </recommendedName>
    <alternativeName>
        <fullName>Dihydrolipoamide acetyltransferase component of pyruvate dehydrogenase complex</fullName>
    </alternativeName>
    <alternativeName>
        <fullName>E2</fullName>
    </alternativeName>
</protein>
<dbReference type="EC" id="2.3.1.12"/>
<dbReference type="EMBL" id="U62057">
    <property type="protein sequence ID" value="AAC44344.1"/>
    <property type="molecule type" value="Genomic_DNA"/>
</dbReference>
<dbReference type="EMBL" id="CP000123">
    <property type="protein sequence ID" value="ABC01559.1"/>
    <property type="molecule type" value="Genomic_DNA"/>
</dbReference>
<dbReference type="RefSeq" id="WP_011387115.1">
    <property type="nucleotide sequence ID" value="NC_007633.1"/>
</dbReference>
<dbReference type="SMR" id="Q49110"/>
<dbReference type="GeneID" id="23778820"/>
<dbReference type="KEGG" id="mcp:MCAP_0227"/>
<dbReference type="HOGENOM" id="CLU_016733_10_0_14"/>
<dbReference type="PhylomeDB" id="Q49110"/>
<dbReference type="Proteomes" id="UP000001928">
    <property type="component" value="Chromosome"/>
</dbReference>
<dbReference type="GO" id="GO:0005737">
    <property type="term" value="C:cytoplasm"/>
    <property type="evidence" value="ECO:0007669"/>
    <property type="project" value="TreeGrafter"/>
</dbReference>
<dbReference type="GO" id="GO:0004742">
    <property type="term" value="F:dihydrolipoyllysine-residue acetyltransferase activity"/>
    <property type="evidence" value="ECO:0007669"/>
    <property type="project" value="UniProtKB-EC"/>
</dbReference>
<dbReference type="GO" id="GO:0031405">
    <property type="term" value="F:lipoic acid binding"/>
    <property type="evidence" value="ECO:0007669"/>
    <property type="project" value="TreeGrafter"/>
</dbReference>
<dbReference type="CDD" id="cd06849">
    <property type="entry name" value="lipoyl_domain"/>
    <property type="match status" value="1"/>
</dbReference>
<dbReference type="FunFam" id="3.30.559.10:FF:000007">
    <property type="entry name" value="Dihydrolipoamide acetyltransferase component of pyruvate dehydrogenase complex"/>
    <property type="match status" value="1"/>
</dbReference>
<dbReference type="Gene3D" id="2.40.50.100">
    <property type="match status" value="1"/>
</dbReference>
<dbReference type="Gene3D" id="3.30.559.10">
    <property type="entry name" value="Chloramphenicol acetyltransferase-like domain"/>
    <property type="match status" value="1"/>
</dbReference>
<dbReference type="Gene3D" id="4.10.320.10">
    <property type="entry name" value="E3-binding domain"/>
    <property type="match status" value="1"/>
</dbReference>
<dbReference type="InterPro" id="IPR003016">
    <property type="entry name" value="2-oxoA_DH_lipoyl-BS"/>
</dbReference>
<dbReference type="InterPro" id="IPR001078">
    <property type="entry name" value="2-oxoacid_DH_actylTfrase"/>
</dbReference>
<dbReference type="InterPro" id="IPR050743">
    <property type="entry name" value="2-oxoacid_DH_E2_comp"/>
</dbReference>
<dbReference type="InterPro" id="IPR000089">
    <property type="entry name" value="Biotin_lipoyl"/>
</dbReference>
<dbReference type="InterPro" id="IPR023213">
    <property type="entry name" value="CAT-like_dom_sf"/>
</dbReference>
<dbReference type="InterPro" id="IPR036625">
    <property type="entry name" value="E3-bd_dom_sf"/>
</dbReference>
<dbReference type="InterPro" id="IPR004167">
    <property type="entry name" value="PSBD"/>
</dbReference>
<dbReference type="InterPro" id="IPR011053">
    <property type="entry name" value="Single_hybrid_motif"/>
</dbReference>
<dbReference type="PANTHER" id="PTHR43178">
    <property type="entry name" value="DIHYDROLIPOAMIDE ACETYLTRANSFERASE COMPONENT OF PYRUVATE DEHYDROGENASE COMPLEX"/>
    <property type="match status" value="1"/>
</dbReference>
<dbReference type="PANTHER" id="PTHR43178:SF5">
    <property type="entry name" value="LIPOAMIDE ACYLTRANSFERASE COMPONENT OF BRANCHED-CHAIN ALPHA-KETO ACID DEHYDROGENASE COMPLEX, MITOCHONDRIAL"/>
    <property type="match status" value="1"/>
</dbReference>
<dbReference type="Pfam" id="PF00198">
    <property type="entry name" value="2-oxoacid_dh"/>
    <property type="match status" value="1"/>
</dbReference>
<dbReference type="Pfam" id="PF00364">
    <property type="entry name" value="Biotin_lipoyl"/>
    <property type="match status" value="1"/>
</dbReference>
<dbReference type="Pfam" id="PF02817">
    <property type="entry name" value="E3_binding"/>
    <property type="match status" value="1"/>
</dbReference>
<dbReference type="SUPFAM" id="SSF52777">
    <property type="entry name" value="CoA-dependent acyltransferases"/>
    <property type="match status" value="1"/>
</dbReference>
<dbReference type="SUPFAM" id="SSF47005">
    <property type="entry name" value="Peripheral subunit-binding domain of 2-oxo acid dehydrogenase complex"/>
    <property type="match status" value="1"/>
</dbReference>
<dbReference type="SUPFAM" id="SSF51230">
    <property type="entry name" value="Single hybrid motif"/>
    <property type="match status" value="1"/>
</dbReference>
<dbReference type="PROSITE" id="PS50968">
    <property type="entry name" value="BIOTINYL_LIPOYL"/>
    <property type="match status" value="1"/>
</dbReference>
<dbReference type="PROSITE" id="PS00189">
    <property type="entry name" value="LIPOYL"/>
    <property type="match status" value="1"/>
</dbReference>
<dbReference type="PROSITE" id="PS51826">
    <property type="entry name" value="PSBD"/>
    <property type="match status" value="1"/>
</dbReference>
<feature type="chain" id="PRO_0000162280" description="Dihydrolipoyllysine-residue acetyltransferase component of pyruvate dehydrogenase complex">
    <location>
        <begin position="1"/>
        <end position="438"/>
    </location>
</feature>
<feature type="domain" description="Lipoyl-binding" evidence="3">
    <location>
        <begin position="1"/>
        <end position="76"/>
    </location>
</feature>
<feature type="domain" description="Peripheral subunit-binding (PSBD)" evidence="4">
    <location>
        <begin position="132"/>
        <end position="169"/>
    </location>
</feature>
<feature type="region of interest" description="Disordered" evidence="5">
    <location>
        <begin position="172"/>
        <end position="192"/>
    </location>
</feature>
<feature type="compositionally biased region" description="Polar residues" evidence="5">
    <location>
        <begin position="172"/>
        <end position="181"/>
    </location>
</feature>
<feature type="active site" evidence="2">
    <location>
        <position position="411"/>
    </location>
</feature>
<feature type="modified residue" description="N6-lipoyllysine" evidence="1 3">
    <location>
        <position position="42"/>
    </location>
</feature>
<reference key="1">
    <citation type="journal article" date="1996" name="Protein Sci.">
        <title>Sequence and organization of genes encoding enzymes involved in pyruvate metabolism in Mycoplasma capricolum.</title>
        <authorList>
            <person name="Zhu P.P."/>
            <person name="Peterkofsky A."/>
        </authorList>
    </citation>
    <scope>NUCLEOTIDE SEQUENCE [GENOMIC DNA]</scope>
</reference>
<reference key="2">
    <citation type="submission" date="2005-09" db="EMBL/GenBank/DDBJ databases">
        <authorList>
            <person name="Glass J.I."/>
            <person name="Lartigue C."/>
            <person name="Pfannkoch C."/>
            <person name="Baden-Tillson H."/>
            <person name="Smith H.O."/>
            <person name="Venter J.C."/>
            <person name="Roske K."/>
            <person name="Wise K.S."/>
            <person name="Calcutt M.J."/>
            <person name="Nelson W.C."/>
            <person name="Nierman W.C."/>
        </authorList>
    </citation>
    <scope>NUCLEOTIDE SEQUENCE [LARGE SCALE GENOMIC DNA]</scope>
    <source>
        <strain>California kid / ATCC 27343 / NCTC 10154</strain>
    </source>
</reference>
<sequence>MFKVKFADIGEGLTEGTVAEVLVKVGDVVKEGQSLYFVETDKVNSEIPAPVAGKIAVINIKAGQEIKVGDVVMEIEDGSDTSATSEPKAETKSEAKVEVVEENASVVGATPVSNDVIVRKQTTTVNKSSTIKATPLARKVAADLNIDLSLVTPTGPNQRILVADIKNHQASSTQLASQPISQPAPTPSPSAHQTIAPTIKVVEPSAPLSWDEVPMNGVRKATVKAMTKSHTEIAAFTGMKNTDITETHKMRTELKDHAAASGIKLTYLAFIIKAVAKSLRDMPNINVRGDFANNKIQFMHNINIGIAVDTPNGLMVPVIKGADHLSVFEIAIKISELANKAKDGKLTRAEMTEATFTVSNFGSVGLDYATPIINSPESAILGVGTMSQTPLYINGELQKRFIMPLSMTCDHRIIDGADAGRFLIKVQDYLSKPVLLFM</sequence>
<accession>Q49110</accession>
<accession>Q2SSP9</accession>
<keyword id="KW-0012">Acyltransferase</keyword>
<keyword id="KW-0450">Lipoyl</keyword>
<keyword id="KW-0808">Transferase</keyword>
<comment type="function">
    <text evidence="1">The pyruvate dehydrogenase complex catalyzes the overall conversion of pyruvate to acetyl-CoA and CO(2). It contains multiple copies of three enzymatic components: pyruvate dehydrogenase (E1), dihydrolipoamide acetyltransferase (E2) and lipoamide dehydrogenase (E3) (By similarity).</text>
</comment>
<comment type="catalytic activity">
    <reaction>
        <text>N(6)-[(R)-dihydrolipoyl]-L-lysyl-[protein] + acetyl-CoA = N(6)-[(R)-S(8)-acetyldihydrolipoyl]-L-lysyl-[protein] + CoA</text>
        <dbReference type="Rhea" id="RHEA:17017"/>
        <dbReference type="Rhea" id="RHEA-COMP:10475"/>
        <dbReference type="Rhea" id="RHEA-COMP:10478"/>
        <dbReference type="ChEBI" id="CHEBI:57287"/>
        <dbReference type="ChEBI" id="CHEBI:57288"/>
        <dbReference type="ChEBI" id="CHEBI:83100"/>
        <dbReference type="ChEBI" id="CHEBI:83111"/>
        <dbReference type="EC" id="2.3.1.12"/>
    </reaction>
</comment>
<comment type="cofactor">
    <cofactor evidence="1">
        <name>(R)-lipoate</name>
        <dbReference type="ChEBI" id="CHEBI:83088"/>
    </cofactor>
    <text evidence="1">Binds 1 lipoyl cofactor covalently.</text>
</comment>
<comment type="subunit">
    <text evidence="1">Forms a 24-polypeptide structural core with octahedral symmetry.</text>
</comment>
<comment type="similarity">
    <text evidence="6">Belongs to the 2-oxoacid dehydrogenase family.</text>
</comment>
<proteinExistence type="inferred from homology"/>
<organism>
    <name type="scientific">Mycoplasma capricolum subsp. capricolum (strain California kid / ATCC 27343 / NCTC 10154)</name>
    <dbReference type="NCBI Taxonomy" id="340047"/>
    <lineage>
        <taxon>Bacteria</taxon>
        <taxon>Bacillati</taxon>
        <taxon>Mycoplasmatota</taxon>
        <taxon>Mollicutes</taxon>
        <taxon>Mycoplasmataceae</taxon>
        <taxon>Mycoplasma</taxon>
    </lineage>
</organism>
<gene>
    <name type="primary">pdhC</name>
    <name type="synonym">odp2</name>
    <name type="ordered locus">MCAP_0227</name>
</gene>
<name>ODP2_MYCCT</name>